<sequence length="703" mass="80770">MGFDNPRSERFEDDPEISKIPTTSGVKVKYHIDGTQIPEQSSKKSRKNETRNKFLKTRVLSRVFSEDYERVKKRVLVLDPRGQLIHRWNKIFLVACLVSLFVDPLFFYLPVVREEVCIDIGKTLEVILTVVRSFGDLFYIVQICMKFRTAYVAPSSKVFGRGELVLTYSKIALRYFSKGFWLDFIAALPLPQVLIWIIIPTLRGSTMANTKNVLRFFIIFQYIPRLYLIFPLSSQIVKATGVVTETAWAGAAYNLMLYMLASHILGACWYLLSIERQEACWKSVCNMEKSNCQYGFFNCHSIKDAPRVAWFIASNVTNLCSPNAGFYPFGIYADAMTSKVTSSPFFNKYFYCLWWGLRNLSSLGQGLLTSTFIGEIMVAIVVATLGLVLFALLIGNMQTYLQSITVRLEEWRVKRTDTEQWMHHRQLPPELRESIRKYNQYKWVATRGVEEEDLLKGLPLDLRREIKRHLCLELVRGVPLFDQMDERMLDAICERLKPALCTEGTYLVREGDPVNEMLFIIRGHLDSYTTNGGRDGFFNSCRIGPGDFCGEELLTWALDPRPSVILPSSTRTVKAFSEVEAFALIAEDLKFVASQFRRLHSKQLRHKFRFYSHQWRTWAACFIQAAWRRHKKRKEAAELRAKENLVAASEAENEIAKKYGKGFVVYGTRVARSTRKGVNMHSGTNSGVVSSLQKPTEPDFSDE</sequence>
<name>CN15C_MEDTR</name>
<organism evidence="8">
    <name type="scientific">Medicago truncatula</name>
    <name type="common">Barrel medic</name>
    <name type="synonym">Medicago tribuloides</name>
    <dbReference type="NCBI Taxonomy" id="3880"/>
    <lineage>
        <taxon>Eukaryota</taxon>
        <taxon>Viridiplantae</taxon>
        <taxon>Streptophyta</taxon>
        <taxon>Embryophyta</taxon>
        <taxon>Tracheophyta</taxon>
        <taxon>Spermatophyta</taxon>
        <taxon>Magnoliopsida</taxon>
        <taxon>eudicotyledons</taxon>
        <taxon>Gunneridae</taxon>
        <taxon>Pentapetalae</taxon>
        <taxon>rosids</taxon>
        <taxon>fabids</taxon>
        <taxon>Fabales</taxon>
        <taxon>Fabaceae</taxon>
        <taxon>Papilionoideae</taxon>
        <taxon>50 kb inversion clade</taxon>
        <taxon>NPAAA clade</taxon>
        <taxon>Hologalegina</taxon>
        <taxon>IRL clade</taxon>
        <taxon>Trifolieae</taxon>
        <taxon>Medicago</taxon>
    </lineage>
</organism>
<accession>A0A072VMJ3</accession>
<protein>
    <recommendedName>
        <fullName evidence="6">Protein CNGC15c</fullName>
    </recommendedName>
    <alternativeName>
        <fullName evidence="6">Cyclic nucleotide-gated ion channel protein 15 c</fullName>
    </alternativeName>
</protein>
<dbReference type="EMBL" id="CM001218">
    <property type="protein sequence ID" value="KEH39345.1"/>
    <property type="molecule type" value="Genomic_DNA"/>
</dbReference>
<dbReference type="STRING" id="3880.A0A072VMJ3"/>
<dbReference type="EnsemblPlants" id="rna12228">
    <property type="protein sequence ID" value="RHN75964.1"/>
    <property type="gene ID" value="gene12228"/>
</dbReference>
<dbReference type="GeneID" id="25487817"/>
<dbReference type="Gramene" id="rna12228">
    <property type="protein sequence ID" value="RHN75964.1"/>
    <property type="gene ID" value="gene12228"/>
</dbReference>
<dbReference type="KEGG" id="mtr:25487817"/>
<dbReference type="HOGENOM" id="CLU_013069_3_0_1"/>
<dbReference type="OrthoDB" id="421226at2759"/>
<dbReference type="Proteomes" id="UP000002051">
    <property type="component" value="Chromosome 2"/>
</dbReference>
<dbReference type="GO" id="GO:0031965">
    <property type="term" value="C:nuclear membrane"/>
    <property type="evidence" value="ECO:0007669"/>
    <property type="project" value="UniProtKB-SubCell"/>
</dbReference>
<dbReference type="GO" id="GO:0044325">
    <property type="term" value="F:transmembrane transporter binding"/>
    <property type="evidence" value="ECO:0000353"/>
    <property type="project" value="UniProtKB"/>
</dbReference>
<dbReference type="GO" id="GO:0005249">
    <property type="term" value="F:voltage-gated potassium channel activity"/>
    <property type="evidence" value="ECO:0007669"/>
    <property type="project" value="InterPro"/>
</dbReference>
<dbReference type="CDD" id="cd00038">
    <property type="entry name" value="CAP_ED"/>
    <property type="match status" value="1"/>
</dbReference>
<dbReference type="CDD" id="cd23767">
    <property type="entry name" value="IQCD"/>
    <property type="match status" value="1"/>
</dbReference>
<dbReference type="FunFam" id="1.10.287.630:FF:000003">
    <property type="entry name" value="Cyclic nucleotide-gated ion channel 1"/>
    <property type="match status" value="1"/>
</dbReference>
<dbReference type="FunFam" id="2.60.120.10:FF:000024">
    <property type="entry name" value="Cyclic nucleotide-gated ion channel 1"/>
    <property type="match status" value="1"/>
</dbReference>
<dbReference type="Gene3D" id="1.10.287.70">
    <property type="match status" value="1"/>
</dbReference>
<dbReference type="Gene3D" id="1.10.287.630">
    <property type="entry name" value="Helix hairpin bin"/>
    <property type="match status" value="1"/>
</dbReference>
<dbReference type="Gene3D" id="2.60.120.10">
    <property type="entry name" value="Jelly Rolls"/>
    <property type="match status" value="1"/>
</dbReference>
<dbReference type="InterPro" id="IPR000595">
    <property type="entry name" value="cNMP-bd_dom"/>
</dbReference>
<dbReference type="InterPro" id="IPR018490">
    <property type="entry name" value="cNMP-bd_dom_sf"/>
</dbReference>
<dbReference type="InterPro" id="IPR005821">
    <property type="entry name" value="Ion_trans_dom"/>
</dbReference>
<dbReference type="InterPro" id="IPR003938">
    <property type="entry name" value="K_chnl_volt-dep_EAG/ELK/ERG"/>
</dbReference>
<dbReference type="InterPro" id="IPR014710">
    <property type="entry name" value="RmlC-like_jellyroll"/>
</dbReference>
<dbReference type="PANTHER" id="PTHR45651">
    <property type="entry name" value="CYCLIC NUCLEOTIDE-GATED ION CHANNEL 15-RELATED-RELATED"/>
    <property type="match status" value="1"/>
</dbReference>
<dbReference type="PANTHER" id="PTHR45651:SF108">
    <property type="entry name" value="PROTEIN CNGC15C"/>
    <property type="match status" value="1"/>
</dbReference>
<dbReference type="Pfam" id="PF00027">
    <property type="entry name" value="cNMP_binding"/>
    <property type="match status" value="1"/>
</dbReference>
<dbReference type="Pfam" id="PF00520">
    <property type="entry name" value="Ion_trans"/>
    <property type="match status" value="1"/>
</dbReference>
<dbReference type="PRINTS" id="PR01463">
    <property type="entry name" value="EAGCHANLFMLY"/>
</dbReference>
<dbReference type="SMART" id="SM00100">
    <property type="entry name" value="cNMP"/>
    <property type="match status" value="1"/>
</dbReference>
<dbReference type="SUPFAM" id="SSF51206">
    <property type="entry name" value="cAMP-binding domain-like"/>
    <property type="match status" value="1"/>
</dbReference>
<dbReference type="SUPFAM" id="SSF81324">
    <property type="entry name" value="Voltage-gated potassium channels"/>
    <property type="match status" value="1"/>
</dbReference>
<dbReference type="PROSITE" id="PS50042">
    <property type="entry name" value="CNMP_BINDING_3"/>
    <property type="match status" value="1"/>
</dbReference>
<dbReference type="PROSITE" id="PS50096">
    <property type="entry name" value="IQ"/>
    <property type="match status" value="1"/>
</dbReference>
<gene>
    <name evidence="6" type="primary">CNGC15C</name>
    <name type="ordered locus">MTR_2g094860</name>
</gene>
<proteinExistence type="evidence at protein level"/>
<feature type="chain" id="PRO_0000437094" description="Protein CNGC15c">
    <location>
        <begin position="1"/>
        <end position="703"/>
    </location>
</feature>
<feature type="transmembrane region" description="Helical" evidence="1">
    <location>
        <begin position="91"/>
        <end position="111"/>
    </location>
</feature>
<feature type="transmembrane region" description="Helical" evidence="1">
    <location>
        <begin position="179"/>
        <end position="199"/>
    </location>
</feature>
<feature type="transmembrane region" description="Helical" evidence="1">
    <location>
        <begin position="216"/>
        <end position="236"/>
    </location>
</feature>
<feature type="transmembrane region" description="Helical" evidence="1">
    <location>
        <begin position="255"/>
        <end position="275"/>
    </location>
</feature>
<feature type="transmembrane region" description="Helical" evidence="1">
    <location>
        <begin position="372"/>
        <end position="392"/>
    </location>
</feature>
<feature type="domain" description="IQ" evidence="3">
    <location>
        <begin position="616"/>
        <end position="644"/>
    </location>
</feature>
<feature type="region of interest" description="Disordered" evidence="4">
    <location>
        <begin position="1"/>
        <end position="23"/>
    </location>
</feature>
<feature type="region of interest" description="Disordered" evidence="4">
    <location>
        <begin position="676"/>
        <end position="703"/>
    </location>
</feature>
<feature type="compositionally biased region" description="Basic and acidic residues" evidence="4">
    <location>
        <begin position="1"/>
        <end position="10"/>
    </location>
</feature>
<feature type="compositionally biased region" description="Polar residues" evidence="4">
    <location>
        <begin position="681"/>
        <end position="694"/>
    </location>
</feature>
<feature type="binding site" evidence="2">
    <location>
        <begin position="480"/>
        <end position="565"/>
    </location>
    <ligand>
        <name>a nucleoside 3',5'-cyclic phosphate</name>
        <dbReference type="ChEBI" id="CHEBI:58464"/>
    </ligand>
</feature>
<keyword id="KW-0407">Ion channel</keyword>
<keyword id="KW-0406">Ion transport</keyword>
<keyword id="KW-1071">Ligand-gated ion channel</keyword>
<keyword id="KW-0472">Membrane</keyword>
<keyword id="KW-0539">Nucleus</keyword>
<keyword id="KW-1185">Reference proteome</keyword>
<keyword id="KW-0812">Transmembrane</keyword>
<keyword id="KW-1133">Transmembrane helix</keyword>
<keyword id="KW-0813">Transport</keyword>
<comment type="function">
    <text evidence="5">Cyclic nucleotide-gated channel involved in the establishment of both rhizobial and mycorrhizal associations (PubMed:27230377). Required for full activation of nuclear-localized Ca(2+) oscillations by Nod and Myc factors (PubMed:27230377). Simultaneous activation of the K(+)-permeable channel DMI1 and the Ca(2+) channel CNGC15 can give rise to sustained Ca(2+) oscillations (PubMed:27230377). May function during fertilization in both female and male gametophytic Ca(2+) signaling (PubMed:27230377).</text>
</comment>
<comment type="subunit">
    <text evidence="5">Interacts (via N-terminus) with DMI1 (via c-terminus). The Nod factor has no effect on this interaction, implying that the complex is maintained after activation.</text>
</comment>
<comment type="subcellular location">
    <subcellularLocation>
        <location evidence="5">Nucleus membrane</location>
        <topology evidence="1">Multi-pass membrane protein</topology>
    </subcellularLocation>
</comment>
<comment type="tissue specificity">
    <text evidence="5">Expressed in roots, stems, leaves, flowers and pods.</text>
</comment>
<comment type="similarity">
    <text evidence="7">Belongs to the cyclic nucleotide-gated cation channel (TC 1.A.1.5) family.</text>
</comment>
<evidence type="ECO:0000255" key="1"/>
<evidence type="ECO:0000255" key="2">
    <source>
        <dbReference type="PROSITE-ProRule" id="PRU00060"/>
    </source>
</evidence>
<evidence type="ECO:0000255" key="3">
    <source>
        <dbReference type="PROSITE-ProRule" id="PRU00116"/>
    </source>
</evidence>
<evidence type="ECO:0000256" key="4">
    <source>
        <dbReference type="SAM" id="MobiDB-lite"/>
    </source>
</evidence>
<evidence type="ECO:0000269" key="5">
    <source>
    </source>
</evidence>
<evidence type="ECO:0000303" key="6">
    <source>
    </source>
</evidence>
<evidence type="ECO:0000305" key="7"/>
<evidence type="ECO:0000312" key="8">
    <source>
        <dbReference type="Proteomes" id="UP000002051"/>
    </source>
</evidence>
<reference key="1">
    <citation type="journal article" date="2011" name="Nature">
        <title>The Medicago genome provides insight into the evolution of rhizobial symbioses.</title>
        <authorList>
            <person name="Young N.D."/>
            <person name="Debelle F."/>
            <person name="Oldroyd G.E.D."/>
            <person name="Geurts R."/>
            <person name="Cannon S.B."/>
            <person name="Udvardi M.K."/>
            <person name="Benedito V.A."/>
            <person name="Mayer K.F.X."/>
            <person name="Gouzy J."/>
            <person name="Schoof H."/>
            <person name="Van de Peer Y."/>
            <person name="Proost S."/>
            <person name="Cook D.R."/>
            <person name="Meyers B.C."/>
            <person name="Spannagl M."/>
            <person name="Cheung F."/>
            <person name="De Mita S."/>
            <person name="Krishnakumar V."/>
            <person name="Gundlach H."/>
            <person name="Zhou S."/>
            <person name="Mudge J."/>
            <person name="Bharti A.K."/>
            <person name="Murray J.D."/>
            <person name="Naoumkina M.A."/>
            <person name="Rosen B."/>
            <person name="Silverstein K.A.T."/>
            <person name="Tang H."/>
            <person name="Rombauts S."/>
            <person name="Zhao P.X."/>
            <person name="Zhou P."/>
            <person name="Barbe V."/>
            <person name="Bardou P."/>
            <person name="Bechner M."/>
            <person name="Bellec A."/>
            <person name="Berger A."/>
            <person name="Berges H."/>
            <person name="Bidwell S."/>
            <person name="Bisseling T."/>
            <person name="Choisne N."/>
            <person name="Couloux A."/>
            <person name="Denny R."/>
            <person name="Deshpande S."/>
            <person name="Dai X."/>
            <person name="Doyle J.J."/>
            <person name="Dudez A.-M."/>
            <person name="Farmer A.D."/>
            <person name="Fouteau S."/>
            <person name="Franken C."/>
            <person name="Gibelin C."/>
            <person name="Gish J."/>
            <person name="Goldstein S."/>
            <person name="Gonzalez A.J."/>
            <person name="Green P.J."/>
            <person name="Hallab A."/>
            <person name="Hartog M."/>
            <person name="Hua A."/>
            <person name="Humphray S.J."/>
            <person name="Jeong D.-H."/>
            <person name="Jing Y."/>
            <person name="Jocker A."/>
            <person name="Kenton S.M."/>
            <person name="Kim D.-J."/>
            <person name="Klee K."/>
            <person name="Lai H."/>
            <person name="Lang C."/>
            <person name="Lin S."/>
            <person name="Macmil S.L."/>
            <person name="Magdelenat G."/>
            <person name="Matthews L."/>
            <person name="McCorrison J."/>
            <person name="Monaghan E.L."/>
            <person name="Mun J.-H."/>
            <person name="Najar F.Z."/>
            <person name="Nicholson C."/>
            <person name="Noirot C."/>
            <person name="O'Bleness M."/>
            <person name="Paule C.R."/>
            <person name="Poulain J."/>
            <person name="Prion F."/>
            <person name="Qin B."/>
            <person name="Qu C."/>
            <person name="Retzel E.F."/>
            <person name="Riddle C."/>
            <person name="Sallet E."/>
            <person name="Samain S."/>
            <person name="Samson N."/>
            <person name="Sanders I."/>
            <person name="Saurat O."/>
            <person name="Scarpelli C."/>
            <person name="Schiex T."/>
            <person name="Segurens B."/>
            <person name="Severin A.J."/>
            <person name="Sherrier D.J."/>
            <person name="Shi R."/>
            <person name="Sims S."/>
            <person name="Singer S.R."/>
            <person name="Sinharoy S."/>
            <person name="Sterck L."/>
            <person name="Viollet A."/>
            <person name="Wang B.-B."/>
            <person name="Wang K."/>
            <person name="Wang M."/>
            <person name="Wang X."/>
            <person name="Warfsmann J."/>
            <person name="Weissenbach J."/>
            <person name="White D.D."/>
            <person name="White J.D."/>
            <person name="Wiley G.B."/>
            <person name="Wincker P."/>
            <person name="Xing Y."/>
            <person name="Yang L."/>
            <person name="Yao Z."/>
            <person name="Ying F."/>
            <person name="Zhai J."/>
            <person name="Zhou L."/>
            <person name="Zuber A."/>
            <person name="Denarie J."/>
            <person name="Dixon R.A."/>
            <person name="May G.D."/>
            <person name="Schwartz D.C."/>
            <person name="Rogers J."/>
            <person name="Quetier F."/>
            <person name="Town C.D."/>
            <person name="Roe B.A."/>
        </authorList>
    </citation>
    <scope>NUCLEOTIDE SEQUENCE [LARGE SCALE GENOMIC DNA]</scope>
    <source>
        <strain>cv. Jemalong A17</strain>
    </source>
</reference>
<reference key="2">
    <citation type="journal article" date="2014" name="BMC Genomics">
        <title>An improved genome release (version Mt4.0) for the model legume Medicago truncatula.</title>
        <authorList>
            <person name="Tang H."/>
            <person name="Krishnakumar V."/>
            <person name="Bidwell S."/>
            <person name="Rosen B."/>
            <person name="Chan A."/>
            <person name="Zhou S."/>
            <person name="Gentzbittel L."/>
            <person name="Childs K.L."/>
            <person name="Yandell M."/>
            <person name="Gundlach H."/>
            <person name="Mayer K.F."/>
            <person name="Schwartz D.C."/>
            <person name="Town C.D."/>
        </authorList>
    </citation>
    <scope>GENOME REANNOTATION</scope>
    <source>
        <strain>cv. Jemalong A17</strain>
    </source>
</reference>
<reference key="3">
    <citation type="journal article" date="2016" name="Science">
        <title>Nuclear-localized cyclic nucleotide-gated channels mediate symbiotic calcium oscillations.</title>
        <authorList>
            <person name="Charpentier M."/>
            <person name="Sun J."/>
            <person name="Martins T.V."/>
            <person name="Radhakrishnan G.V."/>
            <person name="Findlay K."/>
            <person name="Soumpourou E."/>
            <person name="Thouin J."/>
            <person name="Very A.A."/>
            <person name="Sanders D."/>
            <person name="Morris R.J."/>
            <person name="Oldroyd G.E."/>
        </authorList>
    </citation>
    <scope>FUNCTION</scope>
    <scope>TISSUE SPECIFICITY</scope>
    <scope>SUBCELLULAR LOCATION</scope>
    <scope>INTERACTION WITH DMI1</scope>
    <scope>GENE FAMILY</scope>
    <scope>NOMENCLATURE</scope>
</reference>